<proteinExistence type="evidence at transcript level"/>
<feature type="chain" id="PRO_0000097688" description="Sericin-1">
    <location>
        <begin position="1" status="less than"/>
        <end position="115"/>
    </location>
</feature>
<feature type="region of interest" description="Disordered" evidence="1">
    <location>
        <begin position="1"/>
        <end position="115"/>
    </location>
</feature>
<feature type="non-terminal residue">
    <location>
        <position position="1"/>
    </location>
</feature>
<dbReference type="EMBL" id="AF095241">
    <property type="protein sequence ID" value="AAC79078.1"/>
    <property type="molecule type" value="mRNA"/>
</dbReference>
<dbReference type="PIR" id="D61615">
    <property type="entry name" value="D61615"/>
</dbReference>
<dbReference type="SMR" id="O96614"/>
<dbReference type="InParanoid" id="O96614"/>
<dbReference type="Proteomes" id="UP000504614">
    <property type="component" value="Unplaced"/>
</dbReference>
<dbReference type="GO" id="GO:0005576">
    <property type="term" value="C:extracellular region"/>
    <property type="evidence" value="ECO:0007669"/>
    <property type="project" value="UniProtKB-SubCell"/>
</dbReference>
<dbReference type="InterPro" id="IPR008160">
    <property type="entry name" value="Collagen"/>
</dbReference>
<dbReference type="Pfam" id="PF01391">
    <property type="entry name" value="Collagen"/>
    <property type="match status" value="1"/>
</dbReference>
<keyword id="KW-1185">Reference proteome</keyword>
<keyword id="KW-0964">Secreted</keyword>
<keyword id="KW-0737">Silk protein</keyword>
<reference key="1">
    <citation type="journal article" date="1992" name="Insect Biochem. Mol. Biol.">
        <title>Silk gland specific cDNAs from Galleria mellonella L.</title>
        <authorList>
            <person name="Zurovec M."/>
            <person name="Sehnal F."/>
            <person name="Scheller K."/>
            <person name="Kumaran A.K."/>
        </authorList>
    </citation>
    <scope>NUCLEOTIDE SEQUENCE [MRNA]</scope>
    <source>
        <tissue>Middle silk gland</tissue>
    </source>
</reference>
<sequence>GSSGSSGSSGSSGSSGSSGSSGSSGSSGSSGSSGSSGSSGSSGSSGSSGSSGSSGSSGSSGSSGSSGSSGSSGSSGSSGSSGSSSSSSSNGSGSSSGSSQSSGSQGGSSSTSSSN</sequence>
<accession>O96614</accession>
<gene>
    <name type="primary">SER1</name>
    <name type="synonym">SER-1</name>
</gene>
<protein>
    <recommendedName>
        <fullName>Sericin-1</fullName>
    </recommendedName>
    <alternativeName>
        <fullName>Silk gum protein 1</fullName>
    </alternativeName>
</protein>
<organism>
    <name type="scientific">Galleria mellonella</name>
    <name type="common">Greater wax moth</name>
    <dbReference type="NCBI Taxonomy" id="7137"/>
    <lineage>
        <taxon>Eukaryota</taxon>
        <taxon>Metazoa</taxon>
        <taxon>Ecdysozoa</taxon>
        <taxon>Arthropoda</taxon>
        <taxon>Hexapoda</taxon>
        <taxon>Insecta</taxon>
        <taxon>Pterygota</taxon>
        <taxon>Neoptera</taxon>
        <taxon>Endopterygota</taxon>
        <taxon>Lepidoptera</taxon>
        <taxon>Glossata</taxon>
        <taxon>Ditrysia</taxon>
        <taxon>Pyraloidea</taxon>
        <taxon>Pyralidae</taxon>
        <taxon>Galleriinae</taxon>
        <taxon>Galleria</taxon>
    </lineage>
</organism>
<comment type="function">
    <text>Provides the silk fibroin thread with a sticky coating. Acts as a cement by sticking silk threads together.</text>
</comment>
<comment type="subcellular location">
    <subcellularLocation>
        <location>Secreted</location>
    </subcellularLocation>
</comment>
<comment type="tissue specificity">
    <text>Produced exclusively in the middle (MSG) section of silk glands.</text>
</comment>
<name>SER1_GALME</name>
<evidence type="ECO:0000256" key="1">
    <source>
        <dbReference type="SAM" id="MobiDB-lite"/>
    </source>
</evidence>